<evidence type="ECO:0000255" key="1">
    <source>
        <dbReference type="HAMAP-Rule" id="MF_01523"/>
    </source>
</evidence>
<protein>
    <recommendedName>
        <fullName evidence="1">Ribosomal RNA small subunit methyltransferase J</fullName>
        <ecNumber evidence="1">2.1.1.242</ecNumber>
    </recommendedName>
    <alternativeName>
        <fullName evidence="1">16S rRNA m2G1516 methyltransferase</fullName>
    </alternativeName>
    <alternativeName>
        <fullName evidence="1">rRNA (guanine-N(2)-)-methyltransferase</fullName>
    </alternativeName>
</protein>
<proteinExistence type="inferred from homology"/>
<accession>B5FKL3</accession>
<organism>
    <name type="scientific">Salmonella dublin (strain CT_02021853)</name>
    <dbReference type="NCBI Taxonomy" id="439851"/>
    <lineage>
        <taxon>Bacteria</taxon>
        <taxon>Pseudomonadati</taxon>
        <taxon>Pseudomonadota</taxon>
        <taxon>Gammaproteobacteria</taxon>
        <taxon>Enterobacterales</taxon>
        <taxon>Enterobacteriaceae</taxon>
        <taxon>Salmonella</taxon>
    </lineage>
</organism>
<reference key="1">
    <citation type="journal article" date="2011" name="J. Bacteriol.">
        <title>Comparative genomics of 28 Salmonella enterica isolates: evidence for CRISPR-mediated adaptive sublineage evolution.</title>
        <authorList>
            <person name="Fricke W.F."/>
            <person name="Mammel M.K."/>
            <person name="McDermott P.F."/>
            <person name="Tartera C."/>
            <person name="White D.G."/>
            <person name="Leclerc J.E."/>
            <person name="Ravel J."/>
            <person name="Cebula T.A."/>
        </authorList>
    </citation>
    <scope>NUCLEOTIDE SEQUENCE [LARGE SCALE GENOMIC DNA]</scope>
    <source>
        <strain>CT_02021853</strain>
    </source>
</reference>
<comment type="function">
    <text evidence="1">Specifically methylates the guanosine in position 1516 of 16S rRNA.</text>
</comment>
<comment type="catalytic activity">
    <reaction evidence="1">
        <text>guanosine(1516) in 16S rRNA + S-adenosyl-L-methionine = N(2)-methylguanosine(1516) in 16S rRNA + S-adenosyl-L-homocysteine + H(+)</text>
        <dbReference type="Rhea" id="RHEA:43220"/>
        <dbReference type="Rhea" id="RHEA-COMP:10412"/>
        <dbReference type="Rhea" id="RHEA-COMP:10413"/>
        <dbReference type="ChEBI" id="CHEBI:15378"/>
        <dbReference type="ChEBI" id="CHEBI:57856"/>
        <dbReference type="ChEBI" id="CHEBI:59789"/>
        <dbReference type="ChEBI" id="CHEBI:74269"/>
        <dbReference type="ChEBI" id="CHEBI:74481"/>
        <dbReference type="EC" id="2.1.1.242"/>
    </reaction>
</comment>
<comment type="subcellular location">
    <subcellularLocation>
        <location evidence="1">Cytoplasm</location>
    </subcellularLocation>
</comment>
<comment type="similarity">
    <text evidence="1">Belongs to the methyltransferase superfamily. RsmJ family.</text>
</comment>
<sequence>MQICLMDETGATDGALSVLAARWGLEHDEDNPMALVLTPQHLELRKRDEPKLGGIFVDFVGGAMAHRRKFGGGRGEAVAKAVGIKGDYLPDVVDATAGLGRDAFVLASVGCRVRMLERNPVVAALLDDGLTRGYADADIGGWLQERLQLIHASSLTALTDITPRPQVVYLDPMFPHRQKSALVKKEMRVFQSLVGPDLDADGLLEPARQLATKRVVVKRPDYAPPLADVATPNAIVTKGHRFDIYAGTPLTE</sequence>
<gene>
    <name evidence="1" type="primary">rsmJ</name>
    <name type="synonym">yhiQ</name>
    <name type="ordered locus">SeD_A3967</name>
</gene>
<dbReference type="EC" id="2.1.1.242" evidence="1"/>
<dbReference type="EMBL" id="CP001144">
    <property type="protein sequence ID" value="ACH77936.1"/>
    <property type="molecule type" value="Genomic_DNA"/>
</dbReference>
<dbReference type="RefSeq" id="WP_001165127.1">
    <property type="nucleotide sequence ID" value="NC_011205.1"/>
</dbReference>
<dbReference type="SMR" id="B5FKL3"/>
<dbReference type="KEGG" id="sed:SeD_A3967"/>
<dbReference type="HOGENOM" id="CLU_076324_0_0_6"/>
<dbReference type="Proteomes" id="UP000008322">
    <property type="component" value="Chromosome"/>
</dbReference>
<dbReference type="GO" id="GO:0005737">
    <property type="term" value="C:cytoplasm"/>
    <property type="evidence" value="ECO:0007669"/>
    <property type="project" value="UniProtKB-SubCell"/>
</dbReference>
<dbReference type="GO" id="GO:0008990">
    <property type="term" value="F:rRNA (guanine-N2-)-methyltransferase activity"/>
    <property type="evidence" value="ECO:0007669"/>
    <property type="project" value="UniProtKB-UniRule"/>
</dbReference>
<dbReference type="CDD" id="cd02440">
    <property type="entry name" value="AdoMet_MTases"/>
    <property type="match status" value="1"/>
</dbReference>
<dbReference type="FunFam" id="3.40.1630.10:FF:000001">
    <property type="entry name" value="Ribosomal RNA small subunit methyltransferase J"/>
    <property type="match status" value="1"/>
</dbReference>
<dbReference type="FunFam" id="3.40.50.150:FF:000072">
    <property type="entry name" value="Ribosomal RNA small subunit methyltransferase J"/>
    <property type="match status" value="1"/>
</dbReference>
<dbReference type="Gene3D" id="3.40.50.150">
    <property type="entry name" value="Vaccinia Virus protein VP39"/>
    <property type="match status" value="1"/>
</dbReference>
<dbReference type="Gene3D" id="3.40.1630.10">
    <property type="entry name" value="YhiQ-like domain"/>
    <property type="match status" value="1"/>
</dbReference>
<dbReference type="HAMAP" id="MF_01523">
    <property type="entry name" value="16SrRNA_methyltr_J"/>
    <property type="match status" value="1"/>
</dbReference>
<dbReference type="InterPro" id="IPR007536">
    <property type="entry name" value="16SrRNA_methylTrfase_J"/>
</dbReference>
<dbReference type="InterPro" id="IPR029063">
    <property type="entry name" value="SAM-dependent_MTases_sf"/>
</dbReference>
<dbReference type="NCBIfam" id="NF008012">
    <property type="entry name" value="PRK10742.1"/>
    <property type="match status" value="1"/>
</dbReference>
<dbReference type="PANTHER" id="PTHR36112">
    <property type="entry name" value="RIBOSOMAL RNA SMALL SUBUNIT METHYLTRANSFERASE J"/>
    <property type="match status" value="1"/>
</dbReference>
<dbReference type="PANTHER" id="PTHR36112:SF1">
    <property type="entry name" value="RIBOSOMAL RNA SMALL SUBUNIT METHYLTRANSFERASE J"/>
    <property type="match status" value="1"/>
</dbReference>
<dbReference type="Pfam" id="PF04445">
    <property type="entry name" value="SAM_MT"/>
    <property type="match status" value="1"/>
</dbReference>
<dbReference type="SUPFAM" id="SSF53335">
    <property type="entry name" value="S-adenosyl-L-methionine-dependent methyltransferases"/>
    <property type="match status" value="1"/>
</dbReference>
<keyword id="KW-0963">Cytoplasm</keyword>
<keyword id="KW-0489">Methyltransferase</keyword>
<keyword id="KW-0698">rRNA processing</keyword>
<keyword id="KW-0949">S-adenosyl-L-methionine</keyword>
<keyword id="KW-0808">Transferase</keyword>
<feature type="chain" id="PRO_1000198507" description="Ribosomal RNA small subunit methyltransferase J">
    <location>
        <begin position="1"/>
        <end position="252"/>
    </location>
</feature>
<feature type="binding site" evidence="1">
    <location>
        <begin position="101"/>
        <end position="102"/>
    </location>
    <ligand>
        <name>S-adenosyl-L-methionine</name>
        <dbReference type="ChEBI" id="CHEBI:59789"/>
    </ligand>
</feature>
<feature type="binding site" evidence="1">
    <location>
        <begin position="117"/>
        <end position="118"/>
    </location>
    <ligand>
        <name>S-adenosyl-L-methionine</name>
        <dbReference type="ChEBI" id="CHEBI:59789"/>
    </ligand>
</feature>
<feature type="binding site" evidence="1">
    <location>
        <begin position="153"/>
        <end position="154"/>
    </location>
    <ligand>
        <name>S-adenosyl-L-methionine</name>
        <dbReference type="ChEBI" id="CHEBI:59789"/>
    </ligand>
</feature>
<feature type="binding site" evidence="1">
    <location>
        <position position="171"/>
    </location>
    <ligand>
        <name>S-adenosyl-L-methionine</name>
        <dbReference type="ChEBI" id="CHEBI:59789"/>
    </ligand>
</feature>
<name>RSMJ_SALDC</name>